<protein>
    <recommendedName>
        <fullName evidence="1">Large ribosomal subunit protein bL33B</fullName>
    </recommendedName>
    <alternativeName>
        <fullName evidence="1">50S ribosomal protein L33 2</fullName>
    </alternativeName>
</protein>
<accession>Q6A5U7</accession>
<sequence>MAKKTTQLRPIIKLRSTAGTGYTYVTRKNRRNTPDRLVLKKFDPIVRRHVEFKEAR</sequence>
<organism>
    <name type="scientific">Cutibacterium acnes (strain DSM 16379 / KPA171202)</name>
    <name type="common">Propionibacterium acnes</name>
    <dbReference type="NCBI Taxonomy" id="267747"/>
    <lineage>
        <taxon>Bacteria</taxon>
        <taxon>Bacillati</taxon>
        <taxon>Actinomycetota</taxon>
        <taxon>Actinomycetes</taxon>
        <taxon>Propionibacteriales</taxon>
        <taxon>Propionibacteriaceae</taxon>
        <taxon>Cutibacterium</taxon>
    </lineage>
</organism>
<gene>
    <name evidence="1" type="primary">rpmG2</name>
    <name type="ordered locus">PPA2160</name>
</gene>
<proteinExistence type="inferred from homology"/>
<reference key="1">
    <citation type="journal article" date="2004" name="Science">
        <title>The complete genome sequence of Propionibacterium acnes, a commensal of human skin.</title>
        <authorList>
            <person name="Brueggemann H."/>
            <person name="Henne A."/>
            <person name="Hoster F."/>
            <person name="Liesegang H."/>
            <person name="Wiezer A."/>
            <person name="Strittmatter A."/>
            <person name="Hujer S."/>
            <person name="Duerre P."/>
            <person name="Gottschalk G."/>
        </authorList>
    </citation>
    <scope>NUCLEOTIDE SEQUENCE [LARGE SCALE GENOMIC DNA]</scope>
    <source>
        <strain>DSM 16379 / KPA171202</strain>
    </source>
</reference>
<name>RL332_CUTAK</name>
<feature type="chain" id="PRO_0000356615" description="Large ribosomal subunit protein bL33B">
    <location>
        <begin position="1"/>
        <end position="56"/>
    </location>
</feature>
<comment type="similarity">
    <text evidence="1">Belongs to the bacterial ribosomal protein bL33 family.</text>
</comment>
<keyword id="KW-0687">Ribonucleoprotein</keyword>
<keyword id="KW-0689">Ribosomal protein</keyword>
<dbReference type="EMBL" id="AE017283">
    <property type="protein sequence ID" value="AAT83866.1"/>
    <property type="molecule type" value="Genomic_DNA"/>
</dbReference>
<dbReference type="SMR" id="Q6A5U7"/>
<dbReference type="EnsemblBacteria" id="AAT83866">
    <property type="protein sequence ID" value="AAT83866"/>
    <property type="gene ID" value="PPA2160"/>
</dbReference>
<dbReference type="KEGG" id="pac:PPA2160"/>
<dbReference type="eggNOG" id="COG0267">
    <property type="taxonomic scope" value="Bacteria"/>
</dbReference>
<dbReference type="HOGENOM" id="CLU_190949_1_1_11"/>
<dbReference type="Proteomes" id="UP000000603">
    <property type="component" value="Chromosome"/>
</dbReference>
<dbReference type="GO" id="GO:0022625">
    <property type="term" value="C:cytosolic large ribosomal subunit"/>
    <property type="evidence" value="ECO:0007669"/>
    <property type="project" value="TreeGrafter"/>
</dbReference>
<dbReference type="GO" id="GO:0003735">
    <property type="term" value="F:structural constituent of ribosome"/>
    <property type="evidence" value="ECO:0007669"/>
    <property type="project" value="InterPro"/>
</dbReference>
<dbReference type="GO" id="GO:0006412">
    <property type="term" value="P:translation"/>
    <property type="evidence" value="ECO:0007669"/>
    <property type="project" value="UniProtKB-UniRule"/>
</dbReference>
<dbReference type="Gene3D" id="2.20.28.120">
    <property type="entry name" value="Ribosomal protein L33"/>
    <property type="match status" value="1"/>
</dbReference>
<dbReference type="HAMAP" id="MF_00294">
    <property type="entry name" value="Ribosomal_bL33"/>
    <property type="match status" value="1"/>
</dbReference>
<dbReference type="InterPro" id="IPR001705">
    <property type="entry name" value="Ribosomal_bL33"/>
</dbReference>
<dbReference type="InterPro" id="IPR018264">
    <property type="entry name" value="Ribosomal_bL33_CS"/>
</dbReference>
<dbReference type="InterPro" id="IPR038584">
    <property type="entry name" value="Ribosomal_bL33_sf"/>
</dbReference>
<dbReference type="InterPro" id="IPR011332">
    <property type="entry name" value="Ribosomal_zn-bd"/>
</dbReference>
<dbReference type="NCBIfam" id="NF001860">
    <property type="entry name" value="PRK00595.1"/>
    <property type="match status" value="1"/>
</dbReference>
<dbReference type="NCBIfam" id="TIGR01023">
    <property type="entry name" value="rpmG_bact"/>
    <property type="match status" value="1"/>
</dbReference>
<dbReference type="PANTHER" id="PTHR15238">
    <property type="entry name" value="54S RIBOSOMAL PROTEIN L39, MITOCHONDRIAL"/>
    <property type="match status" value="1"/>
</dbReference>
<dbReference type="PANTHER" id="PTHR15238:SF1">
    <property type="entry name" value="LARGE RIBOSOMAL SUBUNIT PROTEIN BL33M"/>
    <property type="match status" value="1"/>
</dbReference>
<dbReference type="Pfam" id="PF00471">
    <property type="entry name" value="Ribosomal_L33"/>
    <property type="match status" value="1"/>
</dbReference>
<dbReference type="SUPFAM" id="SSF57829">
    <property type="entry name" value="Zn-binding ribosomal proteins"/>
    <property type="match status" value="1"/>
</dbReference>
<dbReference type="PROSITE" id="PS00582">
    <property type="entry name" value="RIBOSOMAL_L33"/>
    <property type="match status" value="1"/>
</dbReference>
<evidence type="ECO:0000255" key="1">
    <source>
        <dbReference type="HAMAP-Rule" id="MF_00294"/>
    </source>
</evidence>